<dbReference type="EC" id="2.7.1.225" evidence="2"/>
<dbReference type="EMBL" id="CP000575">
    <property type="protein sequence ID" value="ABN69662.1"/>
    <property type="molecule type" value="Genomic_DNA"/>
</dbReference>
<dbReference type="RefSeq" id="WP_011838853.1">
    <property type="nucleotide sequence ID" value="NC_009033.1"/>
</dbReference>
<dbReference type="SMR" id="A3DM02"/>
<dbReference type="STRING" id="399550.Smar_0555"/>
<dbReference type="GeneID" id="4908020"/>
<dbReference type="KEGG" id="smr:Smar_0555"/>
<dbReference type="eggNOG" id="arCOG01875">
    <property type="taxonomic scope" value="Archaea"/>
</dbReference>
<dbReference type="HOGENOM" id="CLU_1088213_0_0_2"/>
<dbReference type="OrthoDB" id="89900at2157"/>
<dbReference type="Proteomes" id="UP000000254">
    <property type="component" value="Chromosome"/>
</dbReference>
<dbReference type="GO" id="GO:0005694">
    <property type="term" value="C:chromosome"/>
    <property type="evidence" value="ECO:0007669"/>
    <property type="project" value="TreeGrafter"/>
</dbReference>
<dbReference type="GO" id="GO:0005524">
    <property type="term" value="F:ATP binding"/>
    <property type="evidence" value="ECO:0007669"/>
    <property type="project" value="UniProtKB-KW"/>
</dbReference>
<dbReference type="GO" id="GO:0016301">
    <property type="term" value="F:kinase activity"/>
    <property type="evidence" value="ECO:0007669"/>
    <property type="project" value="UniProtKB-KW"/>
</dbReference>
<dbReference type="GO" id="GO:0046872">
    <property type="term" value="F:metal ion binding"/>
    <property type="evidence" value="ECO:0007669"/>
    <property type="project" value="UniProtKB-KW"/>
</dbReference>
<dbReference type="GO" id="GO:0007059">
    <property type="term" value="P:chromosome segregation"/>
    <property type="evidence" value="ECO:0007669"/>
    <property type="project" value="TreeGrafter"/>
</dbReference>
<dbReference type="GO" id="GO:0045881">
    <property type="term" value="P:positive regulation of sporulation resulting in formation of a cellular spore"/>
    <property type="evidence" value="ECO:0007669"/>
    <property type="project" value="TreeGrafter"/>
</dbReference>
<dbReference type="CDD" id="cd16400">
    <property type="entry name" value="ParB_Srx_like_nuclease"/>
    <property type="match status" value="1"/>
</dbReference>
<dbReference type="Gene3D" id="3.30.1760.10">
    <property type="entry name" value="Conserved hypothetical protein from pyrococcus furiosus pfu- 392566-001, domain 2"/>
    <property type="match status" value="1"/>
</dbReference>
<dbReference type="Gene3D" id="3.90.1530.10">
    <property type="entry name" value="Conserved hypothetical protein from pyrococcus furiosus pfu- 392566-001, ParB domain"/>
    <property type="match status" value="1"/>
</dbReference>
<dbReference type="InterPro" id="IPR050336">
    <property type="entry name" value="Chromosome_partition/occlusion"/>
</dbReference>
<dbReference type="InterPro" id="IPR003115">
    <property type="entry name" value="ParB/Sulfiredoxin_dom"/>
</dbReference>
<dbReference type="InterPro" id="IPR036086">
    <property type="entry name" value="ParB/Sulfiredoxin_sf"/>
</dbReference>
<dbReference type="InterPro" id="IPR023098">
    <property type="entry name" value="SerK/SbnI_C"/>
</dbReference>
<dbReference type="InterPro" id="IPR040867">
    <property type="entry name" value="SerK_C"/>
</dbReference>
<dbReference type="PANTHER" id="PTHR33375">
    <property type="entry name" value="CHROMOSOME-PARTITIONING PROTEIN PARB-RELATED"/>
    <property type="match status" value="1"/>
</dbReference>
<dbReference type="PANTHER" id="PTHR33375:SF1">
    <property type="entry name" value="CHROMOSOME-PARTITIONING PROTEIN PARB-RELATED"/>
    <property type="match status" value="1"/>
</dbReference>
<dbReference type="Pfam" id="PF02195">
    <property type="entry name" value="ParBc"/>
    <property type="match status" value="1"/>
</dbReference>
<dbReference type="Pfam" id="PF18231">
    <property type="entry name" value="SerK_C"/>
    <property type="match status" value="1"/>
</dbReference>
<dbReference type="SMART" id="SM00470">
    <property type="entry name" value="ParB"/>
    <property type="match status" value="1"/>
</dbReference>
<dbReference type="SUPFAM" id="SSF110849">
    <property type="entry name" value="ParB/Sulfiredoxin"/>
    <property type="match status" value="1"/>
</dbReference>
<keyword id="KW-0067">ATP-binding</keyword>
<keyword id="KW-0418">Kinase</keyword>
<keyword id="KW-0460">Magnesium</keyword>
<keyword id="KW-0479">Metal-binding</keyword>
<keyword id="KW-0547">Nucleotide-binding</keyword>
<keyword id="KW-1185">Reference proteome</keyword>
<keyword id="KW-0808">Transferase</keyword>
<name>SERK_STAMF</name>
<comment type="function">
    <text evidence="2">Free serine kinase that uses ATP to phosphorylate L-serine to yield O-phospho-L-serine and ADP (PubMed:34096778). Can use ATP, UTP, CTP, GTP and the inorganic polyphosphates triphosphate and tetraphosphate as phosphate donors, with a preference for nucleoside 5'-triphosphates, but cannot use ADP (PubMed:34096778). The catalytic efficiency is highest for ATP (PubMed:34096778). Is specific for L-serine and cannot phosphorylate structurally similar compounds such as D-serine, L-threonine, L-homoserine, hydroxypyruvate, 3-hydroxypropionate and DL-glycerate (PubMed:34096778). Likely contributes to serine metabolism, including cysteine biosynthesis (PubMed:34096778).</text>
</comment>
<comment type="catalytic activity">
    <reaction evidence="2">
        <text>L-serine + ATP = O-phospho-L-serine + ADP + H(+)</text>
        <dbReference type="Rhea" id="RHEA:59112"/>
        <dbReference type="ChEBI" id="CHEBI:15378"/>
        <dbReference type="ChEBI" id="CHEBI:30616"/>
        <dbReference type="ChEBI" id="CHEBI:33384"/>
        <dbReference type="ChEBI" id="CHEBI:57524"/>
        <dbReference type="ChEBI" id="CHEBI:456216"/>
        <dbReference type="EC" id="2.7.1.225"/>
    </reaction>
</comment>
<comment type="cofactor">
    <cofactor evidence="2">
        <name>Mg(2+)</name>
        <dbReference type="ChEBI" id="CHEBI:18420"/>
    </cofactor>
    <text evidence="2">Maximum activity is observed with Mg(2+), and activity is also detected in the presence of Ca(2+), Zn(2+) or Fe(2+).</text>
</comment>
<comment type="biophysicochemical properties">
    <kinetics>
        <Vmax evidence="2">119.0 umol/min/mg enzyme with serine as substrate (at 15 degrees Celsisus)</Vmax>
        <Vmax evidence="2">163.0 umol/min/mg enzyme with ATP as substrate (at 15 degrees Celsisus)</Vmax>
        <Vmax evidence="2">127.0 umol/min/mg enzyme with UTP as substrate (at 15 degrees Celsisus)</Vmax>
        <Vmax evidence="2">270.0 umol/min/mg enzyme with triphosphate as substrate (at 85 degrees Celsisus)</Vmax>
        <text evidence="2">kcat is 57.0 sec(-1) with serine as substrate. kcat is 78.4 sec(-1) with ATP as substrate. kcat is 60.9 sec(-1) with UTP as substrate. kcat is 130 sec(-1) with triphosphate as substrate.</text>
    </kinetics>
    <phDependence>
        <text evidence="2">Activity levels steadily increase with increases in pH from 6.5 to 11.0.</text>
    </phDependence>
    <temperatureDependence>
        <text evidence="2">Activity increases with increasing temperature up to 95 degrees Celsius.</text>
    </temperatureDependence>
</comment>
<comment type="subunit">
    <text evidence="2">Monomer.</text>
</comment>
<comment type="induction">
    <text evidence="2">Constitutively expressed.</text>
</comment>
<comment type="similarity">
    <text evidence="4">Belongs to the SerK family.</text>
</comment>
<feature type="chain" id="PRO_0000461216" description="ATP-dependent L-serine kinase">
    <location>
        <begin position="1"/>
        <end position="252"/>
    </location>
</feature>
<feature type="active site" evidence="1">
    <location>
        <position position="35"/>
    </location>
</feature>
<feature type="binding site" evidence="1">
    <location>
        <position position="73"/>
    </location>
    <ligand>
        <name>O-phospho-L-serine</name>
        <dbReference type="ChEBI" id="CHEBI:57524"/>
    </ligand>
</feature>
<feature type="binding site" evidence="1">
    <location>
        <position position="74"/>
    </location>
    <ligand>
        <name>Mg(2+)</name>
        <dbReference type="ChEBI" id="CHEBI:18420"/>
    </ligand>
</feature>
<feature type="binding site" evidence="1">
    <location>
        <position position="75"/>
    </location>
    <ligand>
        <name>O-phospho-L-serine</name>
        <dbReference type="ChEBI" id="CHEBI:57524"/>
    </ligand>
</feature>
<feature type="binding site" evidence="1">
    <location>
        <position position="76"/>
    </location>
    <ligand>
        <name>O-phospho-L-serine</name>
        <dbReference type="ChEBI" id="CHEBI:57524"/>
    </ligand>
</feature>
<feature type="binding site" evidence="1">
    <location>
        <position position="77"/>
    </location>
    <ligand>
        <name>O-phospho-L-serine</name>
        <dbReference type="ChEBI" id="CHEBI:57524"/>
    </ligand>
</feature>
<feature type="binding site" evidence="1">
    <location>
        <position position="107"/>
    </location>
    <ligand>
        <name>O-phospho-L-serine</name>
        <dbReference type="ChEBI" id="CHEBI:57524"/>
    </ligand>
</feature>
<feature type="binding site" evidence="1">
    <location>
        <position position="231"/>
    </location>
    <ligand>
        <name>O-phospho-L-serine</name>
        <dbReference type="ChEBI" id="CHEBI:57524"/>
    </ligand>
</feature>
<feature type="binding site" evidence="1">
    <location>
        <position position="233"/>
    </location>
    <ligand>
        <name>O-phospho-L-serine</name>
        <dbReference type="ChEBI" id="CHEBI:57524"/>
    </ligand>
</feature>
<feature type="binding site" evidence="1">
    <location>
        <position position="235"/>
    </location>
    <ligand>
        <name>O-phospho-L-serine</name>
        <dbReference type="ChEBI" id="CHEBI:57524"/>
    </ligand>
</feature>
<gene>
    <name evidence="5" type="ordered locus">Smar_0555</name>
</gene>
<accession>A3DM02</accession>
<evidence type="ECO:0000250" key="1">
    <source>
        <dbReference type="UniProtKB" id="Q5JD03"/>
    </source>
</evidence>
<evidence type="ECO:0000269" key="2">
    <source>
    </source>
</evidence>
<evidence type="ECO:0000303" key="3">
    <source>
    </source>
</evidence>
<evidence type="ECO:0000305" key="4"/>
<evidence type="ECO:0000312" key="5">
    <source>
        <dbReference type="EMBL" id="ABN69662.1"/>
    </source>
</evidence>
<protein>
    <recommendedName>
        <fullName evidence="3">ATP-dependent L-serine kinase</fullName>
        <ecNumber evidence="2">2.7.1.225</ecNumber>
    </recommendedName>
    <alternativeName>
        <fullName evidence="3">Sm-SerK</fullName>
    </alternativeName>
</protein>
<reference key="1">
    <citation type="journal article" date="2009" name="BMC Genomics">
        <title>The complete genome sequence of Staphylothermus marinus reveals differences in sulfur metabolism among heterotrophic Crenarchaeota.</title>
        <authorList>
            <person name="Anderson I.J."/>
            <person name="Dharmarajan L."/>
            <person name="Rodriguez J."/>
            <person name="Hooper S."/>
            <person name="Porat I."/>
            <person name="Ulrich L.E."/>
            <person name="Elkins J.G."/>
            <person name="Mavromatis K."/>
            <person name="Sun H."/>
            <person name="Land M."/>
            <person name="Lapidus A."/>
            <person name="Lucas S."/>
            <person name="Barry K."/>
            <person name="Huber H."/>
            <person name="Zhulin I.B."/>
            <person name="Whitman W.B."/>
            <person name="Mukhopadhyay B."/>
            <person name="Woese C."/>
            <person name="Bristow J."/>
            <person name="Kyrpides N."/>
        </authorList>
    </citation>
    <scope>NUCLEOTIDE SEQUENCE [LARGE SCALE GENOMIC DNA]</scope>
    <source>
        <strain>ATCC 43588 / DSM 3639 / JCM 9404 / F1</strain>
    </source>
</reference>
<reference key="2">
    <citation type="journal article" date="2009" name="Stand. Genomic Sci.">
        <title>Complete genome sequence of Staphylothermus marinus Stetter and Fiala 1986 type strain F1.</title>
        <authorList>
            <person name="Anderson I.J."/>
            <person name="Sun H."/>
            <person name="Lapidus A."/>
            <person name="Copeland A."/>
            <person name="Glavina Del Rio T."/>
            <person name="Tice H."/>
            <person name="Dalin E."/>
            <person name="Lucas S."/>
            <person name="Barry K."/>
            <person name="Land M."/>
            <person name="Richardson P."/>
            <person name="Huber H."/>
            <person name="Kyrpides N.C."/>
        </authorList>
    </citation>
    <scope>NUCLEOTIDE SEQUENCE [LARGE SCALE GENOMIC DNA]</scope>
    <source>
        <strain>ATCC 43588 / DSM 3639 / JCM 9404 / F1</strain>
    </source>
</reference>
<reference key="3">
    <citation type="journal article" date="2021" name="J. Bacteriol.">
        <title>Identification and Enzymatic Analysis of an Archaeal ATP-Dependent Serine Kinase from the Hyperthermophilic Archaeon Staphylothermus marinus.</title>
        <authorList>
            <person name="Mori Y."/>
            <person name="Kawamura H."/>
            <person name="Sato T."/>
            <person name="Fujita T."/>
            <person name="Nagata R."/>
            <person name="Fujihashi M."/>
            <person name="Miki K."/>
            <person name="Atomi H."/>
        </authorList>
    </citation>
    <scope>FUNCTION</scope>
    <scope>CATALYTIC ACTIVITY</scope>
    <scope>COFACTOR</scope>
    <scope>BIOPHYSICOCHEMICAL PROPERTIES</scope>
    <scope>SUBUNIT</scope>
    <scope>INDUCTION</scope>
</reference>
<organism>
    <name type="scientific">Staphylothermus marinus (strain ATCC 43588 / DSM 3639 / JCM 9404 / F1)</name>
    <dbReference type="NCBI Taxonomy" id="399550"/>
    <lineage>
        <taxon>Archaea</taxon>
        <taxon>Thermoproteota</taxon>
        <taxon>Thermoprotei</taxon>
        <taxon>Desulfurococcales</taxon>
        <taxon>Desulfurococcaceae</taxon>
        <taxon>Staphylothermus</taxon>
    </lineage>
</organism>
<sequence length="252" mass="28815">MSGKGKVIIKLPKTVIPVKHVEPVLIDVDKLLPHEEIVPGRLKDLMEKIRSEGVVDMPIIVTPIPGIDKYLVVDGHHRWAAVKELGYKKVPAIIIDYFDENVKLKTWYPAIIGSINKLLEEIKKEGIRIEECKGKDDVLKDEELGKYAFVIIGKNNECYKIYGSINEQKIVSKILSKLNLEGEYTLVYYGEKDEALRDLEEGKIDYLFLRKPPTKNEVIEIAKRNQVYSPKTTRHILPYIPAITNTPLDKLK</sequence>
<proteinExistence type="evidence at protein level"/>